<reference key="1">
    <citation type="journal article" date="2002" name="Nature">
        <title>The genome sequence of Schizosaccharomyces pombe.</title>
        <authorList>
            <person name="Wood V."/>
            <person name="Gwilliam R."/>
            <person name="Rajandream M.A."/>
            <person name="Lyne M.H."/>
            <person name="Lyne R."/>
            <person name="Stewart A."/>
            <person name="Sgouros J.G."/>
            <person name="Peat N."/>
            <person name="Hayles J."/>
            <person name="Baker S.G."/>
            <person name="Basham D."/>
            <person name="Bowman S."/>
            <person name="Brooks K."/>
            <person name="Brown D."/>
            <person name="Brown S."/>
            <person name="Chillingworth T."/>
            <person name="Churcher C.M."/>
            <person name="Collins M."/>
            <person name="Connor R."/>
            <person name="Cronin A."/>
            <person name="Davis P."/>
            <person name="Feltwell T."/>
            <person name="Fraser A."/>
            <person name="Gentles S."/>
            <person name="Goble A."/>
            <person name="Hamlin N."/>
            <person name="Harris D.E."/>
            <person name="Hidalgo J."/>
            <person name="Hodgson G."/>
            <person name="Holroyd S."/>
            <person name="Hornsby T."/>
            <person name="Howarth S."/>
            <person name="Huckle E.J."/>
            <person name="Hunt S."/>
            <person name="Jagels K."/>
            <person name="James K.D."/>
            <person name="Jones L."/>
            <person name="Jones M."/>
            <person name="Leather S."/>
            <person name="McDonald S."/>
            <person name="McLean J."/>
            <person name="Mooney P."/>
            <person name="Moule S."/>
            <person name="Mungall K.L."/>
            <person name="Murphy L.D."/>
            <person name="Niblett D."/>
            <person name="Odell C."/>
            <person name="Oliver K."/>
            <person name="O'Neil S."/>
            <person name="Pearson D."/>
            <person name="Quail M.A."/>
            <person name="Rabbinowitsch E."/>
            <person name="Rutherford K.M."/>
            <person name="Rutter S."/>
            <person name="Saunders D."/>
            <person name="Seeger K."/>
            <person name="Sharp S."/>
            <person name="Skelton J."/>
            <person name="Simmonds M.N."/>
            <person name="Squares R."/>
            <person name="Squares S."/>
            <person name="Stevens K."/>
            <person name="Taylor K."/>
            <person name="Taylor R.G."/>
            <person name="Tivey A."/>
            <person name="Walsh S.V."/>
            <person name="Warren T."/>
            <person name="Whitehead S."/>
            <person name="Woodward J.R."/>
            <person name="Volckaert G."/>
            <person name="Aert R."/>
            <person name="Robben J."/>
            <person name="Grymonprez B."/>
            <person name="Weltjens I."/>
            <person name="Vanstreels E."/>
            <person name="Rieger M."/>
            <person name="Schaefer M."/>
            <person name="Mueller-Auer S."/>
            <person name="Gabel C."/>
            <person name="Fuchs M."/>
            <person name="Duesterhoeft A."/>
            <person name="Fritzc C."/>
            <person name="Holzer E."/>
            <person name="Moestl D."/>
            <person name="Hilbert H."/>
            <person name="Borzym K."/>
            <person name="Langer I."/>
            <person name="Beck A."/>
            <person name="Lehrach H."/>
            <person name="Reinhardt R."/>
            <person name="Pohl T.M."/>
            <person name="Eger P."/>
            <person name="Zimmermann W."/>
            <person name="Wedler H."/>
            <person name="Wambutt R."/>
            <person name="Purnelle B."/>
            <person name="Goffeau A."/>
            <person name="Cadieu E."/>
            <person name="Dreano S."/>
            <person name="Gloux S."/>
            <person name="Lelaure V."/>
            <person name="Mottier S."/>
            <person name="Galibert F."/>
            <person name="Aves S.J."/>
            <person name="Xiang Z."/>
            <person name="Hunt C."/>
            <person name="Moore K."/>
            <person name="Hurst S.M."/>
            <person name="Lucas M."/>
            <person name="Rochet M."/>
            <person name="Gaillardin C."/>
            <person name="Tallada V.A."/>
            <person name="Garzon A."/>
            <person name="Thode G."/>
            <person name="Daga R.R."/>
            <person name="Cruzado L."/>
            <person name="Jimenez J."/>
            <person name="Sanchez M."/>
            <person name="del Rey F."/>
            <person name="Benito J."/>
            <person name="Dominguez A."/>
            <person name="Revuelta J.L."/>
            <person name="Moreno S."/>
            <person name="Armstrong J."/>
            <person name="Forsburg S.L."/>
            <person name="Cerutti L."/>
            <person name="Lowe T."/>
            <person name="McCombie W.R."/>
            <person name="Paulsen I."/>
            <person name="Potashkin J."/>
            <person name="Shpakovski G.V."/>
            <person name="Ussery D."/>
            <person name="Barrell B.G."/>
            <person name="Nurse P."/>
        </authorList>
    </citation>
    <scope>NUCLEOTIDE SEQUENCE [LARGE SCALE GENOMIC DNA]</scope>
    <source>
        <strain>972 / ATCC 24843</strain>
    </source>
</reference>
<dbReference type="EMBL" id="CU329670">
    <property type="protein sequence ID" value="CAA90852.1"/>
    <property type="molecule type" value="Genomic_DNA"/>
</dbReference>
<dbReference type="PIR" id="S62410">
    <property type="entry name" value="S62410"/>
</dbReference>
<dbReference type="RefSeq" id="NP_592944.1">
    <property type="nucleotide sequence ID" value="NM_001018345.2"/>
</dbReference>
<dbReference type="SMR" id="Q09762"/>
<dbReference type="BioGRID" id="279080">
    <property type="interactions" value="6"/>
</dbReference>
<dbReference type="iPTMnet" id="Q09762"/>
<dbReference type="PaxDb" id="4896-SPAC24H6.08.1"/>
<dbReference type="EnsemblFungi" id="SPAC24H6.08.1">
    <property type="protein sequence ID" value="SPAC24H6.08.1:pep"/>
    <property type="gene ID" value="SPAC24H6.08"/>
</dbReference>
<dbReference type="KEGG" id="spo:2542626"/>
<dbReference type="PomBase" id="SPAC24H6.08"/>
<dbReference type="VEuPathDB" id="FungiDB:SPAC24H6.08"/>
<dbReference type="HOGENOM" id="CLU_1195472_0_0_1"/>
<dbReference type="InParanoid" id="Q09762"/>
<dbReference type="OMA" id="RWCPVLK"/>
<dbReference type="PRO" id="PR:Q09762"/>
<dbReference type="Proteomes" id="UP000002485">
    <property type="component" value="Chromosome I"/>
</dbReference>
<dbReference type="GO" id="GO:0005829">
    <property type="term" value="C:cytosol"/>
    <property type="evidence" value="ECO:0007005"/>
    <property type="project" value="PomBase"/>
</dbReference>
<dbReference type="GO" id="GO:0005634">
    <property type="term" value="C:nucleus"/>
    <property type="evidence" value="ECO:0007005"/>
    <property type="project" value="PomBase"/>
</dbReference>
<name>YA78_SCHPO</name>
<keyword id="KW-1185">Reference proteome</keyword>
<organism>
    <name type="scientific">Schizosaccharomyces pombe (strain 972 / ATCC 24843)</name>
    <name type="common">Fission yeast</name>
    <dbReference type="NCBI Taxonomy" id="284812"/>
    <lineage>
        <taxon>Eukaryota</taxon>
        <taxon>Fungi</taxon>
        <taxon>Dikarya</taxon>
        <taxon>Ascomycota</taxon>
        <taxon>Taphrinomycotina</taxon>
        <taxon>Schizosaccharomycetes</taxon>
        <taxon>Schizosaccharomycetales</taxon>
        <taxon>Schizosaccharomycetaceae</taxon>
        <taxon>Schizosaccharomyces</taxon>
    </lineage>
</organism>
<feature type="chain" id="PRO_0000116396" description="Uncharacterized protein C24H6.08">
    <location>
        <begin position="1"/>
        <end position="220"/>
    </location>
</feature>
<proteinExistence type="predicted"/>
<sequence length="220" mass="24240">MTSHQTGKIEVHWNDPSSGIFLSQTQRTSSTSSLKKSASSRRLVYGDDMLAPKPLAGQVLSKSPLPPFSPSKIMNRSISVPPTNISVPQISSNPLNLMKKSSDNDIFTTFNDTTNDCMNEASCEDVRHSLLQIIESKSNLSDSVHKMLGERVKTNLLLQGQLENMEGFWLQKLSQTCRLALTGNISEAKAFIVEIMCAGVVTNCVRWCPVLKTLIENLAI</sequence>
<protein>
    <recommendedName>
        <fullName>Uncharacterized protein C24H6.08</fullName>
    </recommendedName>
</protein>
<gene>
    <name type="ORF">SPAC24H6.08</name>
</gene>
<accession>Q09762</accession>